<organism>
    <name type="scientific">Shewanella oneidensis (strain ATCC 700550 / JCM 31522 / CIP 106686 / LMG 19005 / NCIMB 14063 / MR-1)</name>
    <dbReference type="NCBI Taxonomy" id="211586"/>
    <lineage>
        <taxon>Bacteria</taxon>
        <taxon>Pseudomonadati</taxon>
        <taxon>Pseudomonadota</taxon>
        <taxon>Gammaproteobacteria</taxon>
        <taxon>Alteromonadales</taxon>
        <taxon>Shewanellaceae</taxon>
        <taxon>Shewanella</taxon>
    </lineage>
</organism>
<comment type="function">
    <text evidence="1">Globally modulates RNA abundance by binding to RNase E (Rne) and regulating its endonucleolytic activity. Can modulate Rne action in a substrate-dependent manner by altering the composition of the degradosome. Modulates RNA-binding and helicase activities of the degradosome.</text>
</comment>
<comment type="subunit">
    <text evidence="1">Homotrimer. Binds to both RNA-binding sites in the C-terminal region of Rne and to RhlB.</text>
</comment>
<comment type="subcellular location">
    <subcellularLocation>
        <location evidence="1">Cytoplasm</location>
    </subcellularLocation>
</comment>
<comment type="similarity">
    <text evidence="1">Belongs to the RraA family.</text>
</comment>
<keyword id="KW-0963">Cytoplasm</keyword>
<keyword id="KW-1185">Reference proteome</keyword>
<reference key="1">
    <citation type="journal article" date="2002" name="Nat. Biotechnol.">
        <title>Genome sequence of the dissimilatory metal ion-reducing bacterium Shewanella oneidensis.</title>
        <authorList>
            <person name="Heidelberg J.F."/>
            <person name="Paulsen I.T."/>
            <person name="Nelson K.E."/>
            <person name="Gaidos E.J."/>
            <person name="Nelson W.C."/>
            <person name="Read T.D."/>
            <person name="Eisen J.A."/>
            <person name="Seshadri R."/>
            <person name="Ward N.L."/>
            <person name="Methe B.A."/>
            <person name="Clayton R.A."/>
            <person name="Meyer T."/>
            <person name="Tsapin A."/>
            <person name="Scott J."/>
            <person name="Beanan M.J."/>
            <person name="Brinkac L.M."/>
            <person name="Daugherty S.C."/>
            <person name="DeBoy R.T."/>
            <person name="Dodson R.J."/>
            <person name="Durkin A.S."/>
            <person name="Haft D.H."/>
            <person name="Kolonay J.F."/>
            <person name="Madupu R."/>
            <person name="Peterson J.D."/>
            <person name="Umayam L.A."/>
            <person name="White O."/>
            <person name="Wolf A.M."/>
            <person name="Vamathevan J.J."/>
            <person name="Weidman J.F."/>
            <person name="Impraim M."/>
            <person name="Lee K."/>
            <person name="Berry K.J."/>
            <person name="Lee C."/>
            <person name="Mueller J."/>
            <person name="Khouri H.M."/>
            <person name="Gill J."/>
            <person name="Utterback T.R."/>
            <person name="McDonald L.A."/>
            <person name="Feldblyum T.V."/>
            <person name="Smith H.O."/>
            <person name="Venter J.C."/>
            <person name="Nealson K.H."/>
            <person name="Fraser C.M."/>
        </authorList>
    </citation>
    <scope>NUCLEOTIDE SEQUENCE [LARGE SCALE GENOMIC DNA]</scope>
    <source>
        <strain>ATCC 700550 / JCM 31522 / CIP 106686 / LMG 19005 / NCIMB 14063 / MR-1</strain>
    </source>
</reference>
<dbReference type="EMBL" id="AE014299">
    <property type="protein sequence ID" value="AAN57169.1"/>
    <property type="molecule type" value="Genomic_DNA"/>
</dbReference>
<dbReference type="RefSeq" id="NP_719725.1">
    <property type="nucleotide sequence ID" value="NC_004347.2"/>
</dbReference>
<dbReference type="RefSeq" id="WP_011073880.1">
    <property type="nucleotide sequence ID" value="NC_004347.2"/>
</dbReference>
<dbReference type="SMR" id="Q8E9R9"/>
<dbReference type="STRING" id="211586.SO_4197"/>
<dbReference type="PaxDb" id="211586-SO_4197"/>
<dbReference type="KEGG" id="son:SO_4197"/>
<dbReference type="PATRIC" id="fig|211586.12.peg.4052"/>
<dbReference type="eggNOG" id="COG0684">
    <property type="taxonomic scope" value="Bacteria"/>
</dbReference>
<dbReference type="HOGENOM" id="CLU_072626_4_0_6"/>
<dbReference type="OrthoDB" id="943692at2"/>
<dbReference type="PhylomeDB" id="Q8E9R9"/>
<dbReference type="BioCyc" id="SONE211586:G1GMP-3870-MONOMER"/>
<dbReference type="Proteomes" id="UP000008186">
    <property type="component" value="Chromosome"/>
</dbReference>
<dbReference type="GO" id="GO:0005737">
    <property type="term" value="C:cytoplasm"/>
    <property type="evidence" value="ECO:0007669"/>
    <property type="project" value="UniProtKB-SubCell"/>
</dbReference>
<dbReference type="GO" id="GO:0060698">
    <property type="term" value="F:endoribonuclease inhibitor activity"/>
    <property type="evidence" value="ECO:0007669"/>
    <property type="project" value="UniProtKB-UniRule"/>
</dbReference>
<dbReference type="GO" id="GO:0019899">
    <property type="term" value="F:enzyme binding"/>
    <property type="evidence" value="ECO:0007669"/>
    <property type="project" value="UniProtKB-UniRule"/>
</dbReference>
<dbReference type="GO" id="GO:0051252">
    <property type="term" value="P:regulation of RNA metabolic process"/>
    <property type="evidence" value="ECO:0007669"/>
    <property type="project" value="InterPro"/>
</dbReference>
<dbReference type="CDD" id="cd16841">
    <property type="entry name" value="RraA_family"/>
    <property type="match status" value="1"/>
</dbReference>
<dbReference type="Gene3D" id="3.50.30.40">
    <property type="entry name" value="Ribonuclease E inhibitor RraA/RraA-like"/>
    <property type="match status" value="1"/>
</dbReference>
<dbReference type="HAMAP" id="MF_00471">
    <property type="entry name" value="RraA"/>
    <property type="match status" value="1"/>
</dbReference>
<dbReference type="InterPro" id="IPR010203">
    <property type="entry name" value="RraA"/>
</dbReference>
<dbReference type="InterPro" id="IPR005493">
    <property type="entry name" value="RraA/RraA-like"/>
</dbReference>
<dbReference type="InterPro" id="IPR036704">
    <property type="entry name" value="RraA/RraA-like_sf"/>
</dbReference>
<dbReference type="InterPro" id="IPR014339">
    <property type="entry name" value="RraA_gpbac"/>
</dbReference>
<dbReference type="NCBIfam" id="TIGR01935">
    <property type="entry name" value="NOT-MenG"/>
    <property type="match status" value="1"/>
</dbReference>
<dbReference type="NCBIfam" id="NF006875">
    <property type="entry name" value="PRK09372.1"/>
    <property type="match status" value="1"/>
</dbReference>
<dbReference type="NCBIfam" id="TIGR02998">
    <property type="entry name" value="RraA_entero"/>
    <property type="match status" value="1"/>
</dbReference>
<dbReference type="PANTHER" id="PTHR33254">
    <property type="entry name" value="4-HYDROXY-4-METHYL-2-OXOGLUTARATE ALDOLASE 3-RELATED"/>
    <property type="match status" value="1"/>
</dbReference>
<dbReference type="PANTHER" id="PTHR33254:SF29">
    <property type="entry name" value="REGULATOR OF RIBONUCLEASE ACTIVITY A"/>
    <property type="match status" value="1"/>
</dbReference>
<dbReference type="Pfam" id="PF03737">
    <property type="entry name" value="RraA-like"/>
    <property type="match status" value="1"/>
</dbReference>
<dbReference type="SUPFAM" id="SSF89562">
    <property type="entry name" value="RraA-like"/>
    <property type="match status" value="1"/>
</dbReference>
<sequence>MEYNTSELCDMYLDVVDVVEPMFSNYGGCSSFGGSISTIKCFEDNGLITDVLQEDGQGKVLLVDGGGSLRRALIDGTIAELAVSNNWEGIIVYGSVRDVDALEELDIGIQALASIPVGADGNSVGEVDIPVNFGGVTFLPGDHIYADNTGIILSPEPLDIE</sequence>
<feature type="chain" id="PRO_0000209637" description="Regulator of ribonuclease activity A">
    <location>
        <begin position="1"/>
        <end position="161"/>
    </location>
</feature>
<gene>
    <name evidence="1" type="primary">rraA</name>
    <name type="ordered locus">SO_4197</name>
</gene>
<proteinExistence type="inferred from homology"/>
<name>RRAA_SHEON</name>
<evidence type="ECO:0000255" key="1">
    <source>
        <dbReference type="HAMAP-Rule" id="MF_00471"/>
    </source>
</evidence>
<protein>
    <recommendedName>
        <fullName evidence="1">Regulator of ribonuclease activity A</fullName>
    </recommendedName>
</protein>
<accession>Q8E9R9</accession>